<dbReference type="EC" id="7.1.1.-"/>
<dbReference type="EMBL" id="AP009369">
    <property type="protein sequence ID" value="BAF50072.1"/>
    <property type="molecule type" value="Genomic_DNA"/>
</dbReference>
<dbReference type="RefSeq" id="YP_001123247.1">
    <property type="nucleotide sequence ID" value="NC_009268.1"/>
</dbReference>
<dbReference type="SMR" id="A4QK67"/>
<dbReference type="GeneID" id="4962619"/>
<dbReference type="GO" id="GO:0009535">
    <property type="term" value="C:chloroplast thylakoid membrane"/>
    <property type="evidence" value="ECO:0007669"/>
    <property type="project" value="UniProtKB-SubCell"/>
</dbReference>
<dbReference type="GO" id="GO:0008137">
    <property type="term" value="F:NADH dehydrogenase (ubiquinone) activity"/>
    <property type="evidence" value="ECO:0007669"/>
    <property type="project" value="InterPro"/>
</dbReference>
<dbReference type="GO" id="GO:0048038">
    <property type="term" value="F:quinone binding"/>
    <property type="evidence" value="ECO:0007669"/>
    <property type="project" value="UniProtKB-KW"/>
</dbReference>
<dbReference type="GO" id="GO:0042773">
    <property type="term" value="P:ATP synthesis coupled electron transport"/>
    <property type="evidence" value="ECO:0007669"/>
    <property type="project" value="InterPro"/>
</dbReference>
<dbReference type="GO" id="GO:0015990">
    <property type="term" value="P:electron transport coupled proton transport"/>
    <property type="evidence" value="ECO:0007669"/>
    <property type="project" value="TreeGrafter"/>
</dbReference>
<dbReference type="Gene3D" id="1.20.5.2700">
    <property type="match status" value="1"/>
</dbReference>
<dbReference type="InterPro" id="IPR002128">
    <property type="entry name" value="NADH_UbQ_OxRdtase_chlpt_su5_C"/>
</dbReference>
<dbReference type="InterPro" id="IPR018393">
    <property type="entry name" value="NADHpl_OxRdtase_5_subgr"/>
</dbReference>
<dbReference type="InterPro" id="IPR001750">
    <property type="entry name" value="ND/Mrp_TM"/>
</dbReference>
<dbReference type="InterPro" id="IPR003945">
    <property type="entry name" value="NU5C-like"/>
</dbReference>
<dbReference type="InterPro" id="IPR001516">
    <property type="entry name" value="Proton_antipo_N"/>
</dbReference>
<dbReference type="NCBIfam" id="TIGR01974">
    <property type="entry name" value="NDH_I_L"/>
    <property type="match status" value="1"/>
</dbReference>
<dbReference type="NCBIfam" id="NF005141">
    <property type="entry name" value="PRK06590.1"/>
    <property type="match status" value="1"/>
</dbReference>
<dbReference type="PANTHER" id="PTHR42829">
    <property type="entry name" value="NADH-UBIQUINONE OXIDOREDUCTASE CHAIN 5"/>
    <property type="match status" value="1"/>
</dbReference>
<dbReference type="PANTHER" id="PTHR42829:SF2">
    <property type="entry name" value="NADH-UBIQUINONE OXIDOREDUCTASE CHAIN 5"/>
    <property type="match status" value="1"/>
</dbReference>
<dbReference type="Pfam" id="PF01010">
    <property type="entry name" value="Proton_antipo_C"/>
    <property type="match status" value="1"/>
</dbReference>
<dbReference type="Pfam" id="PF00361">
    <property type="entry name" value="Proton_antipo_M"/>
    <property type="match status" value="1"/>
</dbReference>
<dbReference type="Pfam" id="PF00662">
    <property type="entry name" value="Proton_antipo_N"/>
    <property type="match status" value="1"/>
</dbReference>
<dbReference type="PRINTS" id="PR01434">
    <property type="entry name" value="NADHDHGNASE5"/>
</dbReference>
<dbReference type="PRINTS" id="PR01435">
    <property type="entry name" value="NPOXDRDTASE5"/>
</dbReference>
<proteinExistence type="inferred from homology"/>
<feature type="chain" id="PRO_0000360911" description="NAD(P)H-quinone oxidoreductase subunit 5, chloroplastic">
    <location>
        <begin position="1"/>
        <end position="741"/>
    </location>
</feature>
<feature type="transmembrane region" description="Helical" evidence="2">
    <location>
        <begin position="9"/>
        <end position="29"/>
    </location>
</feature>
<feature type="transmembrane region" description="Helical" evidence="2">
    <location>
        <begin position="40"/>
        <end position="60"/>
    </location>
</feature>
<feature type="transmembrane region" description="Helical" evidence="2">
    <location>
        <begin position="89"/>
        <end position="109"/>
    </location>
</feature>
<feature type="transmembrane region" description="Helical" evidence="2">
    <location>
        <begin position="125"/>
        <end position="145"/>
    </location>
</feature>
<feature type="transmembrane region" description="Helical" evidence="2">
    <location>
        <begin position="147"/>
        <end position="167"/>
    </location>
</feature>
<feature type="transmembrane region" description="Helical" evidence="2">
    <location>
        <begin position="185"/>
        <end position="205"/>
    </location>
</feature>
<feature type="transmembrane region" description="Helical" evidence="2">
    <location>
        <begin position="221"/>
        <end position="241"/>
    </location>
</feature>
<feature type="transmembrane region" description="Helical" evidence="2">
    <location>
        <begin position="258"/>
        <end position="278"/>
    </location>
</feature>
<feature type="transmembrane region" description="Helical" evidence="2">
    <location>
        <begin position="280"/>
        <end position="300"/>
    </location>
</feature>
<feature type="transmembrane region" description="Helical" evidence="2">
    <location>
        <begin position="327"/>
        <end position="347"/>
    </location>
</feature>
<feature type="transmembrane region" description="Helical" evidence="2">
    <location>
        <begin position="354"/>
        <end position="374"/>
    </location>
</feature>
<feature type="transmembrane region" description="Helical" evidence="2">
    <location>
        <begin position="396"/>
        <end position="416"/>
    </location>
</feature>
<feature type="transmembrane region" description="Helical" evidence="2">
    <location>
        <begin position="425"/>
        <end position="445"/>
    </location>
</feature>
<feature type="transmembrane region" description="Helical" evidence="2">
    <location>
        <begin position="547"/>
        <end position="567"/>
    </location>
</feature>
<feature type="transmembrane region" description="Helical" evidence="2">
    <location>
        <begin position="602"/>
        <end position="622"/>
    </location>
</feature>
<feature type="transmembrane region" description="Helical" evidence="2">
    <location>
        <begin position="720"/>
        <end position="740"/>
    </location>
</feature>
<evidence type="ECO:0000250" key="1"/>
<evidence type="ECO:0000255" key="2"/>
<evidence type="ECO:0000305" key="3"/>
<gene>
    <name type="primary">ndhF</name>
</gene>
<accession>A4QK67</accession>
<comment type="function">
    <text evidence="1">NDH shuttles electrons from NAD(P)H:plastoquinone, via FMN and iron-sulfur (Fe-S) centers, to quinones in the photosynthetic chain and possibly in a chloroplast respiratory chain. The immediate electron acceptor for the enzyme in this species is believed to be plastoquinone. Couples the redox reaction to proton translocation, and thus conserves the redox energy in a proton gradient (By similarity).</text>
</comment>
<comment type="catalytic activity">
    <reaction>
        <text>a plastoquinone + NADH + (n+1) H(+)(in) = a plastoquinol + NAD(+) + n H(+)(out)</text>
        <dbReference type="Rhea" id="RHEA:42608"/>
        <dbReference type="Rhea" id="RHEA-COMP:9561"/>
        <dbReference type="Rhea" id="RHEA-COMP:9562"/>
        <dbReference type="ChEBI" id="CHEBI:15378"/>
        <dbReference type="ChEBI" id="CHEBI:17757"/>
        <dbReference type="ChEBI" id="CHEBI:57540"/>
        <dbReference type="ChEBI" id="CHEBI:57945"/>
        <dbReference type="ChEBI" id="CHEBI:62192"/>
    </reaction>
</comment>
<comment type="catalytic activity">
    <reaction>
        <text>a plastoquinone + NADPH + (n+1) H(+)(in) = a plastoquinol + NADP(+) + n H(+)(out)</text>
        <dbReference type="Rhea" id="RHEA:42612"/>
        <dbReference type="Rhea" id="RHEA-COMP:9561"/>
        <dbReference type="Rhea" id="RHEA-COMP:9562"/>
        <dbReference type="ChEBI" id="CHEBI:15378"/>
        <dbReference type="ChEBI" id="CHEBI:17757"/>
        <dbReference type="ChEBI" id="CHEBI:57783"/>
        <dbReference type="ChEBI" id="CHEBI:58349"/>
        <dbReference type="ChEBI" id="CHEBI:62192"/>
    </reaction>
</comment>
<comment type="subunit">
    <text evidence="1">NDH is composed of at least 16 different subunits, 5 of which are encoded in the nucleus.</text>
</comment>
<comment type="subcellular location">
    <subcellularLocation>
        <location evidence="1">Plastid</location>
        <location evidence="1">Chloroplast thylakoid membrane</location>
        <topology evidence="1">Multi-pass membrane protein</topology>
    </subcellularLocation>
</comment>
<comment type="similarity">
    <text evidence="3">Belongs to the complex I subunit 5 family.</text>
</comment>
<geneLocation type="chloroplast"/>
<protein>
    <recommendedName>
        <fullName>NAD(P)H-quinone oxidoreductase subunit 5, chloroplastic</fullName>
        <ecNumber>7.1.1.-</ecNumber>
    </recommendedName>
    <alternativeName>
        <fullName>NAD(P)H dehydrogenase subunit 5</fullName>
    </alternativeName>
    <alternativeName>
        <fullName>NADH-plastoquinone oxidoreductase subunit 5</fullName>
    </alternativeName>
</protein>
<name>NU5C_ARAHI</name>
<reference key="1">
    <citation type="submission" date="2007-03" db="EMBL/GenBank/DDBJ databases">
        <title>Sequencing analysis of Arabis hirsuta chloroplast DNA.</title>
        <authorList>
            <person name="Hosouchi T."/>
            <person name="Tsuruoka H."/>
            <person name="Kotani H."/>
        </authorList>
    </citation>
    <scope>NUCLEOTIDE SEQUENCE [LARGE SCALE GENOMIC DNA]</scope>
</reference>
<keyword id="KW-0150">Chloroplast</keyword>
<keyword id="KW-0472">Membrane</keyword>
<keyword id="KW-0520">NAD</keyword>
<keyword id="KW-0521">NADP</keyword>
<keyword id="KW-0934">Plastid</keyword>
<keyword id="KW-0618">Plastoquinone</keyword>
<keyword id="KW-0874">Quinone</keyword>
<keyword id="KW-0793">Thylakoid</keyword>
<keyword id="KW-1278">Translocase</keyword>
<keyword id="KW-0812">Transmembrane</keyword>
<keyword id="KW-1133">Transmembrane helix</keyword>
<keyword id="KW-0813">Transport</keyword>
<sequence length="741" mass="84424">MEHTHQYSWIIPFIPLPVPILLGVGLLLFPTVTKNLRRMWTFLSIFLLSIVMIFSLYLSIQQIFLSYIHQNVWSWAINNEFSFEFGYFIDPLTSIMSILITTVGILVLIYSDNNMSHDQGYLRFFAYMGFFNTSMLGLVTSSNLIQVYFFWELVGMCSYLLIGFWFTRPIPANACQKAFVTNRVGDFGLLLGILGLYWITGSFEFQDLFEIVNNLILNNRVNLLFLTLCAFLLFVGPIAKSAQFPLHVWLPDAMEGPTPISALIHAATMVAAGIFLVARLLPLFIVIPSIMYIISLIGIITVLLGATLALAQKDIKRGLAYSTMSQLGYMMLALGMGSYRSALFHLITHAYSKALLFLGSGSIIHSMEAIVGYSPDKSQNMILMGGLTKHVPITKTAFLVGTLSLCGIPPLACFWSKDEILNDSLLFSPIFAIIAYSTAGLTAFYMFRIYLLTFEGHLNTYFLNYSGKKSSSFYSISLWGKEEEQKLNRNFGLVPLLTMNNTKRVSFFGKKTYKISNNVTNQTFITVENFGLNTRTFYYPHESDNTILFPMLVLLLFTLFVGTIGIPFNQEGIDFDILSKLFTPSINLLHKNSQNFVDWYEFLQNVTFSVSIALFGIFIAYCLYKPFYSSLLNLTLLNSFKKWNSKRIGWEKLINFVYNWSYNRGYIDAFFKTSLTENIRRLAKQTNFFDKQIIDGITNGLGITSFFVGEVTKYIGGSRISSYLFLYLSYVLIFLRILFYF</sequence>
<organism>
    <name type="scientific">Arabis hirsuta</name>
    <name type="common">Hairy rock-cress</name>
    <name type="synonym">Turritis hirsuta</name>
    <dbReference type="NCBI Taxonomy" id="78191"/>
    <lineage>
        <taxon>Eukaryota</taxon>
        <taxon>Viridiplantae</taxon>
        <taxon>Streptophyta</taxon>
        <taxon>Embryophyta</taxon>
        <taxon>Tracheophyta</taxon>
        <taxon>Spermatophyta</taxon>
        <taxon>Magnoliopsida</taxon>
        <taxon>eudicotyledons</taxon>
        <taxon>Gunneridae</taxon>
        <taxon>Pentapetalae</taxon>
        <taxon>rosids</taxon>
        <taxon>malvids</taxon>
        <taxon>Brassicales</taxon>
        <taxon>Brassicaceae</taxon>
        <taxon>Arabideae</taxon>
        <taxon>Arabis</taxon>
    </lineage>
</organism>